<proteinExistence type="inferred from homology"/>
<organism>
    <name type="scientific">Photorhabdus laumondii subsp. laumondii (strain DSM 15139 / CIP 105565 / TT01)</name>
    <name type="common">Photorhabdus luminescens subsp. laumondii</name>
    <dbReference type="NCBI Taxonomy" id="243265"/>
    <lineage>
        <taxon>Bacteria</taxon>
        <taxon>Pseudomonadati</taxon>
        <taxon>Pseudomonadota</taxon>
        <taxon>Gammaproteobacteria</taxon>
        <taxon>Enterobacterales</taxon>
        <taxon>Morganellaceae</taxon>
        <taxon>Photorhabdus</taxon>
    </lineage>
</organism>
<dbReference type="EC" id="6.1.1.19" evidence="1"/>
<dbReference type="EMBL" id="BX571866">
    <property type="protein sequence ID" value="CAE14385.1"/>
    <property type="molecule type" value="Genomic_DNA"/>
</dbReference>
<dbReference type="RefSeq" id="WP_011146347.1">
    <property type="nucleotide sequence ID" value="NC_005126.1"/>
</dbReference>
<dbReference type="SMR" id="Q7N565"/>
<dbReference type="STRING" id="243265.plu2092"/>
<dbReference type="GeneID" id="48848371"/>
<dbReference type="KEGG" id="plu:plu2092"/>
<dbReference type="eggNOG" id="COG0018">
    <property type="taxonomic scope" value="Bacteria"/>
</dbReference>
<dbReference type="HOGENOM" id="CLU_006406_5_1_6"/>
<dbReference type="OrthoDB" id="9803211at2"/>
<dbReference type="Proteomes" id="UP000002514">
    <property type="component" value="Chromosome"/>
</dbReference>
<dbReference type="GO" id="GO:0005737">
    <property type="term" value="C:cytoplasm"/>
    <property type="evidence" value="ECO:0007669"/>
    <property type="project" value="UniProtKB-SubCell"/>
</dbReference>
<dbReference type="GO" id="GO:0004814">
    <property type="term" value="F:arginine-tRNA ligase activity"/>
    <property type="evidence" value="ECO:0007669"/>
    <property type="project" value="UniProtKB-UniRule"/>
</dbReference>
<dbReference type="GO" id="GO:0005524">
    <property type="term" value="F:ATP binding"/>
    <property type="evidence" value="ECO:0007669"/>
    <property type="project" value="UniProtKB-UniRule"/>
</dbReference>
<dbReference type="GO" id="GO:0006420">
    <property type="term" value="P:arginyl-tRNA aminoacylation"/>
    <property type="evidence" value="ECO:0007669"/>
    <property type="project" value="UniProtKB-UniRule"/>
</dbReference>
<dbReference type="CDD" id="cd07956">
    <property type="entry name" value="Anticodon_Ia_Arg"/>
    <property type="match status" value="1"/>
</dbReference>
<dbReference type="CDD" id="cd00671">
    <property type="entry name" value="ArgRS_core"/>
    <property type="match status" value="1"/>
</dbReference>
<dbReference type="FunFam" id="1.10.730.10:FF:000001">
    <property type="entry name" value="Arginine--tRNA ligase"/>
    <property type="match status" value="1"/>
</dbReference>
<dbReference type="FunFam" id="3.30.1360.70:FF:000001">
    <property type="entry name" value="Arginine--tRNA ligase"/>
    <property type="match status" value="1"/>
</dbReference>
<dbReference type="FunFam" id="3.40.50.620:FF:000030">
    <property type="entry name" value="Arginine--tRNA ligase"/>
    <property type="match status" value="1"/>
</dbReference>
<dbReference type="Gene3D" id="3.30.1360.70">
    <property type="entry name" value="Arginyl tRNA synthetase N-terminal domain"/>
    <property type="match status" value="1"/>
</dbReference>
<dbReference type="Gene3D" id="3.40.50.620">
    <property type="entry name" value="HUPs"/>
    <property type="match status" value="1"/>
</dbReference>
<dbReference type="Gene3D" id="1.10.730.10">
    <property type="entry name" value="Isoleucyl-tRNA Synthetase, Domain 1"/>
    <property type="match status" value="1"/>
</dbReference>
<dbReference type="HAMAP" id="MF_00123">
    <property type="entry name" value="Arg_tRNA_synth"/>
    <property type="match status" value="1"/>
</dbReference>
<dbReference type="InterPro" id="IPR001412">
    <property type="entry name" value="aa-tRNA-synth_I_CS"/>
</dbReference>
<dbReference type="InterPro" id="IPR001278">
    <property type="entry name" value="Arg-tRNA-ligase"/>
</dbReference>
<dbReference type="InterPro" id="IPR005148">
    <property type="entry name" value="Arg-tRNA-synth_N"/>
</dbReference>
<dbReference type="InterPro" id="IPR036695">
    <property type="entry name" value="Arg-tRNA-synth_N_sf"/>
</dbReference>
<dbReference type="InterPro" id="IPR035684">
    <property type="entry name" value="ArgRS_core"/>
</dbReference>
<dbReference type="InterPro" id="IPR008909">
    <property type="entry name" value="DALR_anticod-bd"/>
</dbReference>
<dbReference type="InterPro" id="IPR014729">
    <property type="entry name" value="Rossmann-like_a/b/a_fold"/>
</dbReference>
<dbReference type="InterPro" id="IPR009080">
    <property type="entry name" value="tRNAsynth_Ia_anticodon-bd"/>
</dbReference>
<dbReference type="NCBIfam" id="TIGR00456">
    <property type="entry name" value="argS"/>
    <property type="match status" value="1"/>
</dbReference>
<dbReference type="PANTHER" id="PTHR11956:SF5">
    <property type="entry name" value="ARGININE--TRNA LIGASE, CYTOPLASMIC"/>
    <property type="match status" value="1"/>
</dbReference>
<dbReference type="PANTHER" id="PTHR11956">
    <property type="entry name" value="ARGINYL-TRNA SYNTHETASE"/>
    <property type="match status" value="1"/>
</dbReference>
<dbReference type="Pfam" id="PF03485">
    <property type="entry name" value="Arg_tRNA_synt_N"/>
    <property type="match status" value="1"/>
</dbReference>
<dbReference type="Pfam" id="PF05746">
    <property type="entry name" value="DALR_1"/>
    <property type="match status" value="1"/>
</dbReference>
<dbReference type="Pfam" id="PF00750">
    <property type="entry name" value="tRNA-synt_1d"/>
    <property type="match status" value="1"/>
</dbReference>
<dbReference type="PRINTS" id="PR01038">
    <property type="entry name" value="TRNASYNTHARG"/>
</dbReference>
<dbReference type="SMART" id="SM01016">
    <property type="entry name" value="Arg_tRNA_synt_N"/>
    <property type="match status" value="1"/>
</dbReference>
<dbReference type="SMART" id="SM00836">
    <property type="entry name" value="DALR_1"/>
    <property type="match status" value="1"/>
</dbReference>
<dbReference type="SUPFAM" id="SSF47323">
    <property type="entry name" value="Anticodon-binding domain of a subclass of class I aminoacyl-tRNA synthetases"/>
    <property type="match status" value="1"/>
</dbReference>
<dbReference type="SUPFAM" id="SSF55190">
    <property type="entry name" value="Arginyl-tRNA synthetase (ArgRS), N-terminal 'additional' domain"/>
    <property type="match status" value="1"/>
</dbReference>
<dbReference type="SUPFAM" id="SSF52374">
    <property type="entry name" value="Nucleotidylyl transferase"/>
    <property type="match status" value="1"/>
</dbReference>
<dbReference type="PROSITE" id="PS00178">
    <property type="entry name" value="AA_TRNA_LIGASE_I"/>
    <property type="match status" value="1"/>
</dbReference>
<accession>Q7N565</accession>
<keyword id="KW-0030">Aminoacyl-tRNA synthetase</keyword>
<keyword id="KW-0067">ATP-binding</keyword>
<keyword id="KW-0963">Cytoplasm</keyword>
<keyword id="KW-0436">Ligase</keyword>
<keyword id="KW-0547">Nucleotide-binding</keyword>
<keyword id="KW-0648">Protein biosynthesis</keyword>
<keyword id="KW-1185">Reference proteome</keyword>
<evidence type="ECO:0000255" key="1">
    <source>
        <dbReference type="HAMAP-Rule" id="MF_00123"/>
    </source>
</evidence>
<reference key="1">
    <citation type="journal article" date="2003" name="Nat. Biotechnol.">
        <title>The genome sequence of the entomopathogenic bacterium Photorhabdus luminescens.</title>
        <authorList>
            <person name="Duchaud E."/>
            <person name="Rusniok C."/>
            <person name="Frangeul L."/>
            <person name="Buchrieser C."/>
            <person name="Givaudan A."/>
            <person name="Taourit S."/>
            <person name="Bocs S."/>
            <person name="Boursaux-Eude C."/>
            <person name="Chandler M."/>
            <person name="Charles J.-F."/>
            <person name="Dassa E."/>
            <person name="Derose R."/>
            <person name="Derzelle S."/>
            <person name="Freyssinet G."/>
            <person name="Gaudriault S."/>
            <person name="Medigue C."/>
            <person name="Lanois A."/>
            <person name="Powell K."/>
            <person name="Siguier P."/>
            <person name="Vincent R."/>
            <person name="Wingate V."/>
            <person name="Zouine M."/>
            <person name="Glaser P."/>
            <person name="Boemare N."/>
            <person name="Danchin A."/>
            <person name="Kunst F."/>
        </authorList>
    </citation>
    <scope>NUCLEOTIDE SEQUENCE [LARGE SCALE GENOMIC DNA]</scope>
    <source>
        <strain>DSM 15139 / CIP 105565 / TT01</strain>
    </source>
</reference>
<protein>
    <recommendedName>
        <fullName evidence="1">Arginine--tRNA ligase</fullName>
        <ecNumber evidence="1">6.1.1.19</ecNumber>
    </recommendedName>
    <alternativeName>
        <fullName evidence="1">Arginyl-tRNA synthetase</fullName>
        <shortName evidence="1">ArgRS</shortName>
    </alternativeName>
</protein>
<name>SYR_PHOLL</name>
<gene>
    <name evidence="1" type="primary">argS</name>
    <name type="ordered locus">plu2092</name>
</gene>
<comment type="catalytic activity">
    <reaction evidence="1">
        <text>tRNA(Arg) + L-arginine + ATP = L-arginyl-tRNA(Arg) + AMP + diphosphate</text>
        <dbReference type="Rhea" id="RHEA:20301"/>
        <dbReference type="Rhea" id="RHEA-COMP:9658"/>
        <dbReference type="Rhea" id="RHEA-COMP:9673"/>
        <dbReference type="ChEBI" id="CHEBI:30616"/>
        <dbReference type="ChEBI" id="CHEBI:32682"/>
        <dbReference type="ChEBI" id="CHEBI:33019"/>
        <dbReference type="ChEBI" id="CHEBI:78442"/>
        <dbReference type="ChEBI" id="CHEBI:78513"/>
        <dbReference type="ChEBI" id="CHEBI:456215"/>
        <dbReference type="EC" id="6.1.1.19"/>
    </reaction>
</comment>
<comment type="subunit">
    <text evidence="1">Monomer.</text>
</comment>
<comment type="subcellular location">
    <subcellularLocation>
        <location evidence="1">Cytoplasm</location>
    </subcellularLocation>
</comment>
<comment type="similarity">
    <text evidence="1">Belongs to the class-I aminoacyl-tRNA synthetase family.</text>
</comment>
<sequence length="576" mass="64454">MNIQAILSEKVSQALIAAGAPADSEAHIRQSAKAQFGDYQANGVMAAAKKVGMPPRQLAEKVVNLLNLQGIASKVEIAGPGFINIFLDKAWIAANIETALKDEKLGVTPAKPQTIVVDYSAPNVAKQMHVGHLRSTIIGDAAVRTLEFLGHKVIRANHVGDWGTQFGMLIAYLEKVQNENASDMALSDLEAFYREAKKHYDEDEEFAIRARGYVVKLQGGDEYCRTMWRKLVDITMAQNQQTYDRLNVTLTKDSVMGESLYNDLLPSIVADLKQQGLAVESDGATVVYLDEYKNKEGEPMGVIIQKQDGGYLYTTTDIACAKYRYETLHADRILYYIDSRQHQHLMQAWTIVRKAGYVPESVSLEHHMFGMMLGKDSKPFKTRAGGTVRLTDLLDEAIERANTLIREKNPDMPEDELKKVVSAVGIGAVKYADLSKSRTTDYIFDWDNMLAFEGNTAPYMQYAYTRVASIFKRAEIDESSLTLPVILNEDREQTLATRLLQFEETITTVAREGTPHVMCAYLYDLAGLFSCFYEHCQILNAESEELRQSRLKLALLTAKTLKQGLNTLGIETVERM</sequence>
<feature type="chain" id="PRO_0000151587" description="Arginine--tRNA ligase">
    <location>
        <begin position="1"/>
        <end position="576"/>
    </location>
</feature>
<feature type="short sequence motif" description="'HIGH' region">
    <location>
        <begin position="122"/>
        <end position="132"/>
    </location>
</feature>